<organism>
    <name type="scientific">Gallus gallus</name>
    <name type="common">Chicken</name>
    <dbReference type="NCBI Taxonomy" id="9031"/>
    <lineage>
        <taxon>Eukaryota</taxon>
        <taxon>Metazoa</taxon>
        <taxon>Chordata</taxon>
        <taxon>Craniata</taxon>
        <taxon>Vertebrata</taxon>
        <taxon>Euteleostomi</taxon>
        <taxon>Archelosauria</taxon>
        <taxon>Archosauria</taxon>
        <taxon>Dinosauria</taxon>
        <taxon>Saurischia</taxon>
        <taxon>Theropoda</taxon>
        <taxon>Coelurosauria</taxon>
        <taxon>Aves</taxon>
        <taxon>Neognathae</taxon>
        <taxon>Galloanserae</taxon>
        <taxon>Galliformes</taxon>
        <taxon>Phasianidae</taxon>
        <taxon>Phasianinae</taxon>
        <taxon>Gallus</taxon>
    </lineage>
</organism>
<accession>Q5ZID5</accession>
<reference key="1">
    <citation type="journal article" date="2005" name="Genome Biol.">
        <title>Full-length cDNAs from chicken bursal lymphocytes to facilitate gene function analysis.</title>
        <authorList>
            <person name="Caldwell R.B."/>
            <person name="Kierzek A.M."/>
            <person name="Arakawa H."/>
            <person name="Bezzubov Y."/>
            <person name="Zaim J."/>
            <person name="Fiedler P."/>
            <person name="Kutter S."/>
            <person name="Blagodatski A."/>
            <person name="Kostovska D."/>
            <person name="Koter M."/>
            <person name="Plachy J."/>
            <person name="Carninci P."/>
            <person name="Hayashizaki Y."/>
            <person name="Buerstedde J.-M."/>
        </authorList>
    </citation>
    <scope>NUCLEOTIDE SEQUENCE [LARGE SCALE MRNA]</scope>
    <source>
        <strain>CB</strain>
        <tissue>Bursa of Fabricius</tissue>
    </source>
</reference>
<feature type="chain" id="PRO_0000080659" description="Ubiquitin carboxyl-terminal hydrolase 28">
    <location>
        <begin position="1"/>
        <end position="1047"/>
    </location>
</feature>
<feature type="domain" description="UIM" evidence="6">
    <location>
        <begin position="94"/>
        <end position="113"/>
    </location>
</feature>
<feature type="domain" description="USP">
    <location>
        <begin position="156"/>
        <end position="651"/>
    </location>
</feature>
<feature type="region of interest" description="Disordered" evidence="5">
    <location>
        <begin position="60"/>
        <end position="95"/>
    </location>
</feature>
<feature type="region of interest" description="Disordered" evidence="5">
    <location>
        <begin position="110"/>
        <end position="138"/>
    </location>
</feature>
<feature type="region of interest" description="Disordered" evidence="5">
    <location>
        <begin position="461"/>
        <end position="528"/>
    </location>
</feature>
<feature type="region of interest" description="Disordered" evidence="5">
    <location>
        <begin position="694"/>
        <end position="735"/>
    </location>
</feature>
<feature type="compositionally biased region" description="Basic and acidic residues" evidence="5">
    <location>
        <begin position="111"/>
        <end position="128"/>
    </location>
</feature>
<feature type="compositionally biased region" description="Polar residues" evidence="5">
    <location>
        <begin position="461"/>
        <end position="486"/>
    </location>
</feature>
<feature type="compositionally biased region" description="Basic and acidic residues" evidence="5">
    <location>
        <begin position="489"/>
        <end position="498"/>
    </location>
</feature>
<feature type="compositionally biased region" description="Polar residues" evidence="5">
    <location>
        <begin position="504"/>
        <end position="516"/>
    </location>
</feature>
<feature type="compositionally biased region" description="Polar residues" evidence="5">
    <location>
        <begin position="705"/>
        <end position="717"/>
    </location>
</feature>
<feature type="active site" description="Nucleophile" evidence="3 4">
    <location>
        <position position="165"/>
    </location>
</feature>
<feature type="active site" description="Proton acceptor" evidence="3 4">
    <location>
        <position position="601"/>
    </location>
</feature>
<name>UBP28_CHICK</name>
<gene>
    <name type="primary">USP28</name>
    <name type="ORF">RCJMB04_27l24</name>
</gene>
<proteinExistence type="evidence at transcript level"/>
<protein>
    <recommendedName>
        <fullName>Ubiquitin carboxyl-terminal hydrolase 28</fullName>
        <ecNumber>3.4.19.12</ecNumber>
    </recommendedName>
    <alternativeName>
        <fullName>Deubiquitinating enzyme 28</fullName>
    </alternativeName>
    <alternativeName>
        <fullName>Ubiquitin thioesterase 28</fullName>
    </alternativeName>
    <alternativeName>
        <fullName>Ubiquitin-specific-processing protease 28</fullName>
    </alternativeName>
</protein>
<evidence type="ECO:0000250" key="1"/>
<evidence type="ECO:0000250" key="2">
    <source>
        <dbReference type="UniProtKB" id="Q96RU2"/>
    </source>
</evidence>
<evidence type="ECO:0000255" key="3">
    <source>
        <dbReference type="PROSITE-ProRule" id="PRU10092"/>
    </source>
</evidence>
<evidence type="ECO:0000255" key="4">
    <source>
        <dbReference type="PROSITE-ProRule" id="PRU10093"/>
    </source>
</evidence>
<evidence type="ECO:0000256" key="5">
    <source>
        <dbReference type="SAM" id="MobiDB-lite"/>
    </source>
</evidence>
<evidence type="ECO:0000305" key="6"/>
<sequence>MTAELQAASGGPGGLEADCQVLNKMKEITGIQDADFLHAALKAAKGNLMEALIVLTEERDQEPVQNTAAAEPSSWEGSAVGKEPPQGGAAFDPEKKGDVHSAVAYGQLESPKAHAAERPQEVHSPEHKNRSKRKRCEVWGENSKQSDWKRVGDWPVGMKNIGNTCWFSAVIQSLFQLPQFRRLVLSYSFPPNVLESCRTRTGKRNIAFMQELQCLFALMLGTRRKFVDPSAALELLRDAFKSTEEQQQDVSEFTHKLLDWLEDAFQLAVNVRSPGDKSENPMVQLFYGTFLTEGVHEGNTFSKIETFGQYPLQVNGYRNLNECLEGAMVEGEMDEETATQSVKYVQERWFTKLPPVLTFELSRFEFNQSLGQPEKIHTKLEFPQTIFMDRYLYCSKELIQTKREEMKKLKEKMLVLQQKLERYMKYGSGPARFPLPDMLQYVLEFITTKPAGAVSSACVSSTEDSQMMDRQSQGESLILGTPSQPDSMLDGKDGKPEDEAVLLANSSPQQQLNAPLQPSEPPAEMSDCPAPHVVSEEEMNLVTTCLQRWRNEIEQDVRDLKESIARVSLSIDEMYSDPHLQQVPYHLHAVLVHEGQANAGHYWAFIYDQPRKSWLKYNDISVTESSWEELERDSFGGLRNASAYCLMYISDKVSHVVAGEGDGSEVGQFQKEVEALPPELRRYIQEDNWRLEQEAEEWEEEQSCKIPSTASESQELSPESGLDPPAAHEQSLRSLSSEHAMIAKEQTAKAIANAANVYEKNGVEAALCEAFHEEYSRLYLLSKETPTPQNDARLQHVLVYFLQNDAPQQIVERTLLEQFADKNLSYDERSISIMKVARDKLKEIGPDEVNMEEYKKWHEDYSLFRKVSVYLLTGLELYQNRKYKESLTYLIYAYQSNTTLLKKGANRGVNESLITLYRRKCLLKLNEVASSLFVSCEEAHVAEGISILNELIIPCMHLINNFDISREDMDAIEVMRNRWCSYLGREDMDASLQIRLGELLPRLLDGSTEVVVLKEPPKIRPNSPYDLCSRFAAVMESIHDASTVTVK</sequence>
<keyword id="KW-0227">DNA damage</keyword>
<keyword id="KW-0234">DNA repair</keyword>
<keyword id="KW-0378">Hydrolase</keyword>
<keyword id="KW-0539">Nucleus</keyword>
<keyword id="KW-0645">Protease</keyword>
<keyword id="KW-1185">Reference proteome</keyword>
<keyword id="KW-0788">Thiol protease</keyword>
<keyword id="KW-0833">Ubl conjugation pathway</keyword>
<comment type="function">
    <text evidence="2">Deubiquitinase involved in DNA damage response checkpoint and MYC proto-oncogene stability. Involved in DNA damage induced apoptosis by specifically deubiquitinating proteins of the DNA damage pathway such as CLSPN. Also involved in G2 DNA damage checkpoint, by deubiquitinating CLSPN, and preventing its degradation by the anaphase promoting complex/cyclosome (APC/C). Specifically deubiquitinates MYC in the nucleoplasm, leading to prevent MYC degradation by the proteasome. Deubiquitinates ZNF304, hence may prevent ZNF304 degradation by the proteasome, leading to the activated KRAS-mediated promoter hypermethylation and transcriptional silencing of tumor suppressor genes (TSGs).</text>
</comment>
<comment type="catalytic activity">
    <reaction>
        <text>Thiol-dependent hydrolysis of ester, thioester, amide, peptide and isopeptide bonds formed by the C-terminal Gly of ubiquitin (a 76-residue protein attached to proteins as an intracellular targeting signal).</text>
        <dbReference type="EC" id="3.4.19.12"/>
    </reaction>
</comment>
<comment type="subcellular location">
    <subcellularLocation>
        <location evidence="1">Nucleus</location>
        <location evidence="1">Nucleoplasm</location>
    </subcellularLocation>
</comment>
<comment type="similarity">
    <text evidence="6">Belongs to the peptidase C19 family. USP28 subfamily.</text>
</comment>
<dbReference type="EC" id="3.4.19.12"/>
<dbReference type="EMBL" id="AJ720849">
    <property type="protein sequence ID" value="CAG32508.1"/>
    <property type="molecule type" value="mRNA"/>
</dbReference>
<dbReference type="RefSeq" id="NP_001026667.1">
    <property type="nucleotide sequence ID" value="NM_001031496.1"/>
</dbReference>
<dbReference type="SMR" id="Q5ZID5"/>
<dbReference type="FunCoup" id="Q5ZID5">
    <property type="interactions" value="430"/>
</dbReference>
<dbReference type="STRING" id="9031.ENSGALP00000044350"/>
<dbReference type="MEROPS" id="C19.054"/>
<dbReference type="PaxDb" id="9031-ENSGALP00000011273"/>
<dbReference type="GeneID" id="428246"/>
<dbReference type="KEGG" id="gga:428246"/>
<dbReference type="CTD" id="57646"/>
<dbReference type="VEuPathDB" id="HostDB:geneid_428246"/>
<dbReference type="eggNOG" id="KOG1863">
    <property type="taxonomic scope" value="Eukaryota"/>
</dbReference>
<dbReference type="InParanoid" id="Q5ZID5"/>
<dbReference type="OrthoDB" id="2420415at2759"/>
<dbReference type="PhylomeDB" id="Q5ZID5"/>
<dbReference type="PRO" id="PR:Q5ZID5"/>
<dbReference type="Proteomes" id="UP000000539">
    <property type="component" value="Unassembled WGS sequence"/>
</dbReference>
<dbReference type="GO" id="GO:0005829">
    <property type="term" value="C:cytosol"/>
    <property type="evidence" value="ECO:0000318"/>
    <property type="project" value="GO_Central"/>
</dbReference>
<dbReference type="GO" id="GO:0005654">
    <property type="term" value="C:nucleoplasm"/>
    <property type="evidence" value="ECO:0000250"/>
    <property type="project" value="UniProtKB"/>
</dbReference>
<dbReference type="GO" id="GO:0005634">
    <property type="term" value="C:nucleus"/>
    <property type="evidence" value="ECO:0000318"/>
    <property type="project" value="GO_Central"/>
</dbReference>
<dbReference type="GO" id="GO:0004843">
    <property type="term" value="F:cysteine-type deubiquitinase activity"/>
    <property type="evidence" value="ECO:0000250"/>
    <property type="project" value="UniProtKB"/>
</dbReference>
<dbReference type="GO" id="GO:0008283">
    <property type="term" value="P:cell population proliferation"/>
    <property type="evidence" value="ECO:0000250"/>
    <property type="project" value="UniProtKB"/>
</dbReference>
<dbReference type="GO" id="GO:0000077">
    <property type="term" value="P:DNA damage checkpoint signaling"/>
    <property type="evidence" value="ECO:0000250"/>
    <property type="project" value="UniProtKB"/>
</dbReference>
<dbReference type="GO" id="GO:0006281">
    <property type="term" value="P:DNA repair"/>
    <property type="evidence" value="ECO:0007669"/>
    <property type="project" value="UniProtKB-KW"/>
</dbReference>
<dbReference type="GO" id="GO:0042771">
    <property type="term" value="P:intrinsic apoptotic signaling pathway in response to DNA damage by p53 class mediator"/>
    <property type="evidence" value="ECO:0000250"/>
    <property type="project" value="UniProtKB"/>
</dbReference>
<dbReference type="GO" id="GO:0043161">
    <property type="term" value="P:proteasome-mediated ubiquitin-dependent protein catabolic process"/>
    <property type="evidence" value="ECO:0007669"/>
    <property type="project" value="InterPro"/>
</dbReference>
<dbReference type="GO" id="GO:0016579">
    <property type="term" value="P:protein deubiquitination"/>
    <property type="evidence" value="ECO:0000250"/>
    <property type="project" value="UniProtKB"/>
</dbReference>
<dbReference type="GO" id="GO:0031647">
    <property type="term" value="P:regulation of protein stability"/>
    <property type="evidence" value="ECO:0000250"/>
    <property type="project" value="UniProtKB"/>
</dbReference>
<dbReference type="GO" id="GO:0010212">
    <property type="term" value="P:response to ionizing radiation"/>
    <property type="evidence" value="ECO:0000250"/>
    <property type="project" value="UniProtKB"/>
</dbReference>
<dbReference type="CDD" id="cd02665">
    <property type="entry name" value="Peptidase_C19I"/>
    <property type="match status" value="1"/>
</dbReference>
<dbReference type="CDD" id="cd14355">
    <property type="entry name" value="UBA_UBP28"/>
    <property type="match status" value="1"/>
</dbReference>
<dbReference type="CDD" id="cd20487">
    <property type="entry name" value="USP28_C"/>
    <property type="match status" value="1"/>
</dbReference>
<dbReference type="FunFam" id="3.90.70.10:FF:000004">
    <property type="entry name" value="Putative ubiquitin carboxyl-terminal hydrolase 25"/>
    <property type="match status" value="1"/>
</dbReference>
<dbReference type="Gene3D" id="3.90.70.10">
    <property type="entry name" value="Cysteine proteinases"/>
    <property type="match status" value="1"/>
</dbReference>
<dbReference type="Gene3D" id="1.10.8.10">
    <property type="entry name" value="DNA helicase RuvA subunit, C-terminal domain"/>
    <property type="match status" value="1"/>
</dbReference>
<dbReference type="InterPro" id="IPR038765">
    <property type="entry name" value="Papain-like_cys_pep_sf"/>
</dbReference>
<dbReference type="InterPro" id="IPR001394">
    <property type="entry name" value="Peptidase_C19_UCH"/>
</dbReference>
<dbReference type="InterPro" id="IPR009060">
    <property type="entry name" value="UBA-like_sf"/>
</dbReference>
<dbReference type="InterPro" id="IPR044635">
    <property type="entry name" value="UBP14-like"/>
</dbReference>
<dbReference type="InterPro" id="IPR054108">
    <property type="entry name" value="USP25/28_UIM"/>
</dbReference>
<dbReference type="InterPro" id="IPR018200">
    <property type="entry name" value="USP_CS"/>
</dbReference>
<dbReference type="InterPro" id="IPR028889">
    <property type="entry name" value="USP_dom"/>
</dbReference>
<dbReference type="PANTHER" id="PTHR43982">
    <property type="entry name" value="UBIQUITIN CARBOXYL-TERMINAL HYDROLASE"/>
    <property type="match status" value="1"/>
</dbReference>
<dbReference type="PANTHER" id="PTHR43982:SF6">
    <property type="entry name" value="UBIQUITIN CARBOXYL-TERMINAL HYDROLASE 2-RELATED"/>
    <property type="match status" value="1"/>
</dbReference>
<dbReference type="Pfam" id="PF00443">
    <property type="entry name" value="UCH"/>
    <property type="match status" value="1"/>
</dbReference>
<dbReference type="Pfam" id="PF21909">
    <property type="entry name" value="USP_UIM_N"/>
    <property type="match status" value="1"/>
</dbReference>
<dbReference type="SUPFAM" id="SSF54001">
    <property type="entry name" value="Cysteine proteinases"/>
    <property type="match status" value="1"/>
</dbReference>
<dbReference type="SUPFAM" id="SSF46934">
    <property type="entry name" value="UBA-like"/>
    <property type="match status" value="1"/>
</dbReference>
<dbReference type="PROSITE" id="PS00972">
    <property type="entry name" value="USP_1"/>
    <property type="match status" value="1"/>
</dbReference>
<dbReference type="PROSITE" id="PS00973">
    <property type="entry name" value="USP_2"/>
    <property type="match status" value="1"/>
</dbReference>
<dbReference type="PROSITE" id="PS50235">
    <property type="entry name" value="USP_3"/>
    <property type="match status" value="1"/>
</dbReference>